<dbReference type="EC" id="6.3.1.5" evidence="1"/>
<dbReference type="EMBL" id="CP000783">
    <property type="protein sequence ID" value="ABU77397.1"/>
    <property type="molecule type" value="Genomic_DNA"/>
</dbReference>
<dbReference type="RefSeq" id="WP_004387342.1">
    <property type="nucleotide sequence ID" value="NC_009778.1"/>
</dbReference>
<dbReference type="SMR" id="A7MNW9"/>
<dbReference type="GeneID" id="56730908"/>
<dbReference type="KEGG" id="esa:ESA_02148"/>
<dbReference type="HOGENOM" id="CLU_059327_3_0_6"/>
<dbReference type="UniPathway" id="UPA00253">
    <property type="reaction ID" value="UER00333"/>
</dbReference>
<dbReference type="Proteomes" id="UP000000260">
    <property type="component" value="Chromosome"/>
</dbReference>
<dbReference type="GO" id="GO:0005737">
    <property type="term" value="C:cytoplasm"/>
    <property type="evidence" value="ECO:0007669"/>
    <property type="project" value="InterPro"/>
</dbReference>
<dbReference type="GO" id="GO:0005524">
    <property type="term" value="F:ATP binding"/>
    <property type="evidence" value="ECO:0007669"/>
    <property type="project" value="UniProtKB-UniRule"/>
</dbReference>
<dbReference type="GO" id="GO:0004359">
    <property type="term" value="F:glutaminase activity"/>
    <property type="evidence" value="ECO:0007669"/>
    <property type="project" value="InterPro"/>
</dbReference>
<dbReference type="GO" id="GO:0046872">
    <property type="term" value="F:metal ion binding"/>
    <property type="evidence" value="ECO:0007669"/>
    <property type="project" value="UniProtKB-KW"/>
</dbReference>
<dbReference type="GO" id="GO:0003952">
    <property type="term" value="F:NAD+ synthase (glutamine-hydrolyzing) activity"/>
    <property type="evidence" value="ECO:0007669"/>
    <property type="project" value="InterPro"/>
</dbReference>
<dbReference type="GO" id="GO:0008795">
    <property type="term" value="F:NAD+ synthase activity"/>
    <property type="evidence" value="ECO:0007669"/>
    <property type="project" value="UniProtKB-UniRule"/>
</dbReference>
<dbReference type="GO" id="GO:0009435">
    <property type="term" value="P:NAD biosynthetic process"/>
    <property type="evidence" value="ECO:0007669"/>
    <property type="project" value="UniProtKB-UniRule"/>
</dbReference>
<dbReference type="CDD" id="cd00553">
    <property type="entry name" value="NAD_synthase"/>
    <property type="match status" value="1"/>
</dbReference>
<dbReference type="FunFam" id="3.40.50.620:FF:000015">
    <property type="entry name" value="NH(3)-dependent NAD(+) synthetase"/>
    <property type="match status" value="1"/>
</dbReference>
<dbReference type="Gene3D" id="3.40.50.620">
    <property type="entry name" value="HUPs"/>
    <property type="match status" value="1"/>
</dbReference>
<dbReference type="HAMAP" id="MF_00193">
    <property type="entry name" value="NadE_ammonia_dep"/>
    <property type="match status" value="1"/>
</dbReference>
<dbReference type="InterPro" id="IPR022310">
    <property type="entry name" value="NAD/GMP_synthase"/>
</dbReference>
<dbReference type="InterPro" id="IPR003694">
    <property type="entry name" value="NAD_synthase"/>
</dbReference>
<dbReference type="InterPro" id="IPR022926">
    <property type="entry name" value="NH(3)-dep_NAD(+)_synth"/>
</dbReference>
<dbReference type="InterPro" id="IPR014729">
    <property type="entry name" value="Rossmann-like_a/b/a_fold"/>
</dbReference>
<dbReference type="NCBIfam" id="TIGR00552">
    <property type="entry name" value="nadE"/>
    <property type="match status" value="1"/>
</dbReference>
<dbReference type="NCBIfam" id="NF001979">
    <property type="entry name" value="PRK00768.1"/>
    <property type="match status" value="1"/>
</dbReference>
<dbReference type="PANTHER" id="PTHR23090">
    <property type="entry name" value="NH 3 /GLUTAMINE-DEPENDENT NAD + SYNTHETASE"/>
    <property type="match status" value="1"/>
</dbReference>
<dbReference type="PANTHER" id="PTHR23090:SF7">
    <property type="entry name" value="NH(3)-DEPENDENT NAD(+) SYNTHETASE"/>
    <property type="match status" value="1"/>
</dbReference>
<dbReference type="Pfam" id="PF02540">
    <property type="entry name" value="NAD_synthase"/>
    <property type="match status" value="1"/>
</dbReference>
<dbReference type="SUPFAM" id="SSF52402">
    <property type="entry name" value="Adenine nucleotide alpha hydrolases-like"/>
    <property type="match status" value="1"/>
</dbReference>
<sequence length="275" mass="30826">MALQQEIIQALGVKPQIDAHEEIRRSVDFLKSYLKTYPFLKTLVLGISGGQDSTLAGKLSQLAISELRDETGDQSYQFIAVRLPFGVQFDEKDCQDALAFIQPDKVLTVNIKEAVLASEKALREAGIELSDFVRGNEKARERMKAQYSIAGMTKGVVVGTDHAAEAVTGFFTKYGDGGTDINPLFRLNKRQGKLLLKTLGCPEHLYLKVPTADLEDDRPSLPDEVALGVTYDNIDDYLEGKQIDEKISQIIDGWYVKTEHKRRPPITIFDDFWKQ</sequence>
<reference key="1">
    <citation type="journal article" date="2010" name="PLoS ONE">
        <title>Genome sequence of Cronobacter sakazakii BAA-894 and comparative genomic hybridization analysis with other Cronobacter species.</title>
        <authorList>
            <person name="Kucerova E."/>
            <person name="Clifton S.W."/>
            <person name="Xia X.Q."/>
            <person name="Long F."/>
            <person name="Porwollik S."/>
            <person name="Fulton L."/>
            <person name="Fronick C."/>
            <person name="Minx P."/>
            <person name="Kyung K."/>
            <person name="Warren W."/>
            <person name="Fulton R."/>
            <person name="Feng D."/>
            <person name="Wollam A."/>
            <person name="Shah N."/>
            <person name="Bhonagiri V."/>
            <person name="Nash W.E."/>
            <person name="Hallsworth-Pepin K."/>
            <person name="Wilson R.K."/>
            <person name="McClelland M."/>
            <person name="Forsythe S.J."/>
        </authorList>
    </citation>
    <scope>NUCLEOTIDE SEQUENCE [LARGE SCALE GENOMIC DNA]</scope>
    <source>
        <strain>ATCC BAA-894</strain>
    </source>
</reference>
<keyword id="KW-0067">ATP-binding</keyword>
<keyword id="KW-0436">Ligase</keyword>
<keyword id="KW-0460">Magnesium</keyword>
<keyword id="KW-0479">Metal-binding</keyword>
<keyword id="KW-0520">NAD</keyword>
<keyword id="KW-0547">Nucleotide-binding</keyword>
<keyword id="KW-1185">Reference proteome</keyword>
<evidence type="ECO:0000255" key="1">
    <source>
        <dbReference type="HAMAP-Rule" id="MF_00193"/>
    </source>
</evidence>
<name>NADE_CROS8</name>
<gene>
    <name evidence="1" type="primary">nadE</name>
    <name type="ordered locus">ESA_02148</name>
</gene>
<accession>A7MNW9</accession>
<protein>
    <recommendedName>
        <fullName evidence="1">NH(3)-dependent NAD(+) synthetase</fullName>
        <ecNumber evidence="1">6.3.1.5</ecNumber>
    </recommendedName>
</protein>
<feature type="chain" id="PRO_1000077556" description="NH(3)-dependent NAD(+) synthetase">
    <location>
        <begin position="1"/>
        <end position="275"/>
    </location>
</feature>
<feature type="binding site" evidence="1">
    <location>
        <begin position="46"/>
        <end position="53"/>
    </location>
    <ligand>
        <name>ATP</name>
        <dbReference type="ChEBI" id="CHEBI:30616"/>
    </ligand>
</feature>
<feature type="binding site" evidence="1">
    <location>
        <position position="52"/>
    </location>
    <ligand>
        <name>Mg(2+)</name>
        <dbReference type="ChEBI" id="CHEBI:18420"/>
    </ligand>
</feature>
<feature type="binding site" evidence="1">
    <location>
        <position position="140"/>
    </location>
    <ligand>
        <name>deamido-NAD(+)</name>
        <dbReference type="ChEBI" id="CHEBI:58437"/>
    </ligand>
</feature>
<feature type="binding site" evidence="1">
    <location>
        <position position="160"/>
    </location>
    <ligand>
        <name>ATP</name>
        <dbReference type="ChEBI" id="CHEBI:30616"/>
    </ligand>
</feature>
<feature type="binding site" evidence="1">
    <location>
        <position position="165"/>
    </location>
    <ligand>
        <name>Mg(2+)</name>
        <dbReference type="ChEBI" id="CHEBI:18420"/>
    </ligand>
</feature>
<feature type="binding site" evidence="1">
    <location>
        <position position="173"/>
    </location>
    <ligand>
        <name>deamido-NAD(+)</name>
        <dbReference type="ChEBI" id="CHEBI:58437"/>
    </ligand>
</feature>
<feature type="binding site" evidence="1">
    <location>
        <position position="180"/>
    </location>
    <ligand>
        <name>deamido-NAD(+)</name>
        <dbReference type="ChEBI" id="CHEBI:58437"/>
    </ligand>
</feature>
<feature type="binding site" evidence="1">
    <location>
        <position position="189"/>
    </location>
    <ligand>
        <name>ATP</name>
        <dbReference type="ChEBI" id="CHEBI:30616"/>
    </ligand>
</feature>
<feature type="binding site" evidence="1">
    <location>
        <position position="211"/>
    </location>
    <ligand>
        <name>ATP</name>
        <dbReference type="ChEBI" id="CHEBI:30616"/>
    </ligand>
</feature>
<feature type="binding site" evidence="1">
    <location>
        <begin position="260"/>
        <end position="261"/>
    </location>
    <ligand>
        <name>deamido-NAD(+)</name>
        <dbReference type="ChEBI" id="CHEBI:58437"/>
    </ligand>
</feature>
<organism>
    <name type="scientific">Cronobacter sakazakii (strain ATCC BAA-894)</name>
    <name type="common">Enterobacter sakazakii</name>
    <dbReference type="NCBI Taxonomy" id="290339"/>
    <lineage>
        <taxon>Bacteria</taxon>
        <taxon>Pseudomonadati</taxon>
        <taxon>Pseudomonadota</taxon>
        <taxon>Gammaproteobacteria</taxon>
        <taxon>Enterobacterales</taxon>
        <taxon>Enterobacteriaceae</taxon>
        <taxon>Cronobacter</taxon>
    </lineage>
</organism>
<comment type="function">
    <text evidence="1">Catalyzes the ATP-dependent amidation of deamido-NAD to form NAD. Uses ammonia as a nitrogen source.</text>
</comment>
<comment type="catalytic activity">
    <reaction evidence="1">
        <text>deamido-NAD(+) + NH4(+) + ATP = AMP + diphosphate + NAD(+) + H(+)</text>
        <dbReference type="Rhea" id="RHEA:21188"/>
        <dbReference type="ChEBI" id="CHEBI:15378"/>
        <dbReference type="ChEBI" id="CHEBI:28938"/>
        <dbReference type="ChEBI" id="CHEBI:30616"/>
        <dbReference type="ChEBI" id="CHEBI:33019"/>
        <dbReference type="ChEBI" id="CHEBI:57540"/>
        <dbReference type="ChEBI" id="CHEBI:58437"/>
        <dbReference type="ChEBI" id="CHEBI:456215"/>
        <dbReference type="EC" id="6.3.1.5"/>
    </reaction>
</comment>
<comment type="pathway">
    <text evidence="1">Cofactor biosynthesis; NAD(+) biosynthesis; NAD(+) from deamido-NAD(+) (ammonia route): step 1/1.</text>
</comment>
<comment type="subunit">
    <text evidence="1">Homodimer.</text>
</comment>
<comment type="similarity">
    <text evidence="1">Belongs to the NAD synthetase family.</text>
</comment>
<proteinExistence type="inferred from homology"/>